<feature type="chain" id="PRO_0000146214" description="Small ribosomal subunit protein uS12">
    <location>
        <begin position="1"/>
        <end position="122"/>
    </location>
</feature>
<feature type="modified residue" description="3-methylthioaspartic acid" evidence="1">
    <location>
        <position position="89"/>
    </location>
</feature>
<reference key="1">
    <citation type="journal article" date="2003" name="Appl. Microbiol. Biotechnol.">
        <title>The Corynebacterium glutamicum genome: features and impacts on biotechnological processes.</title>
        <authorList>
            <person name="Ikeda M."/>
            <person name="Nakagawa S."/>
        </authorList>
    </citation>
    <scope>NUCLEOTIDE SEQUENCE [LARGE SCALE GENOMIC DNA]</scope>
    <source>
        <strain>ATCC 13032 / DSM 20300 / JCM 1318 / BCRC 11384 / CCUG 27702 / LMG 3730 / NBRC 12168 / NCIMB 10025 / NRRL B-2784 / 534</strain>
    </source>
</reference>
<reference key="2">
    <citation type="journal article" date="2003" name="J. Biotechnol.">
        <title>The complete Corynebacterium glutamicum ATCC 13032 genome sequence and its impact on the production of L-aspartate-derived amino acids and vitamins.</title>
        <authorList>
            <person name="Kalinowski J."/>
            <person name="Bathe B."/>
            <person name="Bartels D."/>
            <person name="Bischoff N."/>
            <person name="Bott M."/>
            <person name="Burkovski A."/>
            <person name="Dusch N."/>
            <person name="Eggeling L."/>
            <person name="Eikmanns B.J."/>
            <person name="Gaigalat L."/>
            <person name="Goesmann A."/>
            <person name="Hartmann M."/>
            <person name="Huthmacher K."/>
            <person name="Kraemer R."/>
            <person name="Linke B."/>
            <person name="McHardy A.C."/>
            <person name="Meyer F."/>
            <person name="Moeckel B."/>
            <person name="Pfefferle W."/>
            <person name="Puehler A."/>
            <person name="Rey D.A."/>
            <person name="Rueckert C."/>
            <person name="Rupp O."/>
            <person name="Sahm H."/>
            <person name="Wendisch V.F."/>
            <person name="Wiegraebe I."/>
            <person name="Tauch A."/>
        </authorList>
    </citation>
    <scope>NUCLEOTIDE SEQUENCE [LARGE SCALE GENOMIC DNA]</scope>
    <source>
        <strain>ATCC 13032 / DSM 20300 / JCM 1318 / BCRC 11384 / CCUG 27702 / LMG 3730 / NBRC 12168 / NCIMB 10025 / NRRL B-2784 / 534</strain>
    </source>
</reference>
<comment type="function">
    <text evidence="2">With S4 and S5 plays an important role in translational accuracy.</text>
</comment>
<comment type="function">
    <text evidence="2">Interacts with and stabilizes bases of the 16S rRNA that are involved in tRNA selection in the A site and with the mRNA backbone. Located at the interface of the 30S and 50S subunits, it traverses the body of the 30S subunit contacting proteins on the other side and probably holding the rRNA structure together. The combined cluster of proteins S8, S12 and S17 appears to hold together the shoulder and platform of the 30S subunit.</text>
</comment>
<comment type="subunit">
    <text evidence="2">Part of the 30S ribosomal subunit. Contacts proteins S8 and S17. May interact with IF1 in the 30S initiation complex.</text>
</comment>
<comment type="similarity">
    <text evidence="2">Belongs to the universal ribosomal protein uS12 family.</text>
</comment>
<accession>Q8NT21</accession>
<name>RS12_CORGL</name>
<sequence length="122" mass="13430">MPTIQQLVRKGRHDKSAKVATAALKGSPQRRGVCTRVYTTTPKKPNSALRKVARVRLTSGIEVSAYIPGEGHNLQEHSMVLVRGGRVKDLPGVRYKIVRGALDTQGVKDRKQARSRYGAKRG</sequence>
<dbReference type="EMBL" id="BA000036">
    <property type="protein sequence ID" value="BAB97886.1"/>
    <property type="molecule type" value="Genomic_DNA"/>
</dbReference>
<dbReference type="EMBL" id="BX927149">
    <property type="protein sequence ID" value="CAF19207.1"/>
    <property type="molecule type" value="Genomic_DNA"/>
</dbReference>
<dbReference type="RefSeq" id="NP_599738.1">
    <property type="nucleotide sequence ID" value="NC_003450.3"/>
</dbReference>
<dbReference type="RefSeq" id="WP_003854221.1">
    <property type="nucleotide sequence ID" value="NC_006958.1"/>
</dbReference>
<dbReference type="SMR" id="Q8NT21"/>
<dbReference type="STRING" id="196627.cg0581"/>
<dbReference type="GeneID" id="1021498"/>
<dbReference type="KEGG" id="cgb:cg0581"/>
<dbReference type="KEGG" id="cgl:Cgl0493"/>
<dbReference type="PATRIC" id="fig|196627.13.peg.492"/>
<dbReference type="eggNOG" id="COG0048">
    <property type="taxonomic scope" value="Bacteria"/>
</dbReference>
<dbReference type="HOGENOM" id="CLU_104295_1_2_11"/>
<dbReference type="OrthoDB" id="9802366at2"/>
<dbReference type="BioCyc" id="CORYNE:G18NG-10055-MONOMER"/>
<dbReference type="Proteomes" id="UP000000582">
    <property type="component" value="Chromosome"/>
</dbReference>
<dbReference type="Proteomes" id="UP000001009">
    <property type="component" value="Chromosome"/>
</dbReference>
<dbReference type="GO" id="GO:0015935">
    <property type="term" value="C:small ribosomal subunit"/>
    <property type="evidence" value="ECO:0007669"/>
    <property type="project" value="InterPro"/>
</dbReference>
<dbReference type="GO" id="GO:0019843">
    <property type="term" value="F:rRNA binding"/>
    <property type="evidence" value="ECO:0007669"/>
    <property type="project" value="UniProtKB-UniRule"/>
</dbReference>
<dbReference type="GO" id="GO:0003735">
    <property type="term" value="F:structural constituent of ribosome"/>
    <property type="evidence" value="ECO:0007669"/>
    <property type="project" value="InterPro"/>
</dbReference>
<dbReference type="GO" id="GO:0000049">
    <property type="term" value="F:tRNA binding"/>
    <property type="evidence" value="ECO:0007669"/>
    <property type="project" value="UniProtKB-UniRule"/>
</dbReference>
<dbReference type="GO" id="GO:0006412">
    <property type="term" value="P:translation"/>
    <property type="evidence" value="ECO:0007669"/>
    <property type="project" value="UniProtKB-UniRule"/>
</dbReference>
<dbReference type="CDD" id="cd03368">
    <property type="entry name" value="Ribosomal_S12"/>
    <property type="match status" value="1"/>
</dbReference>
<dbReference type="FunFam" id="2.40.50.140:FF:000001">
    <property type="entry name" value="30S ribosomal protein S12"/>
    <property type="match status" value="1"/>
</dbReference>
<dbReference type="Gene3D" id="2.40.50.140">
    <property type="entry name" value="Nucleic acid-binding proteins"/>
    <property type="match status" value="1"/>
</dbReference>
<dbReference type="HAMAP" id="MF_00403_B">
    <property type="entry name" value="Ribosomal_uS12_B"/>
    <property type="match status" value="1"/>
</dbReference>
<dbReference type="InterPro" id="IPR012340">
    <property type="entry name" value="NA-bd_OB-fold"/>
</dbReference>
<dbReference type="InterPro" id="IPR006032">
    <property type="entry name" value="Ribosomal_uS12"/>
</dbReference>
<dbReference type="InterPro" id="IPR005679">
    <property type="entry name" value="Ribosomal_uS12_bac"/>
</dbReference>
<dbReference type="NCBIfam" id="TIGR00981">
    <property type="entry name" value="rpsL_bact"/>
    <property type="match status" value="1"/>
</dbReference>
<dbReference type="PANTHER" id="PTHR11652">
    <property type="entry name" value="30S RIBOSOMAL PROTEIN S12 FAMILY MEMBER"/>
    <property type="match status" value="1"/>
</dbReference>
<dbReference type="Pfam" id="PF00164">
    <property type="entry name" value="Ribosom_S12_S23"/>
    <property type="match status" value="1"/>
</dbReference>
<dbReference type="PIRSF" id="PIRSF002133">
    <property type="entry name" value="Ribosomal_S12/S23"/>
    <property type="match status" value="1"/>
</dbReference>
<dbReference type="PRINTS" id="PR01034">
    <property type="entry name" value="RIBOSOMALS12"/>
</dbReference>
<dbReference type="SUPFAM" id="SSF50249">
    <property type="entry name" value="Nucleic acid-binding proteins"/>
    <property type="match status" value="1"/>
</dbReference>
<dbReference type="PROSITE" id="PS00055">
    <property type="entry name" value="RIBOSOMAL_S12"/>
    <property type="match status" value="1"/>
</dbReference>
<proteinExistence type="inferred from homology"/>
<gene>
    <name evidence="2" type="primary">rpsL</name>
    <name type="ordered locus">Cgl0493</name>
    <name type="ordered locus">cg0581</name>
</gene>
<protein>
    <recommendedName>
        <fullName evidence="2">Small ribosomal subunit protein uS12</fullName>
    </recommendedName>
    <alternativeName>
        <fullName evidence="3">30S ribosomal protein S12</fullName>
    </alternativeName>
</protein>
<evidence type="ECO:0000250" key="1"/>
<evidence type="ECO:0000255" key="2">
    <source>
        <dbReference type="HAMAP-Rule" id="MF_00403"/>
    </source>
</evidence>
<evidence type="ECO:0000305" key="3"/>
<organism>
    <name type="scientific">Corynebacterium glutamicum (strain ATCC 13032 / DSM 20300 / JCM 1318 / BCRC 11384 / CCUG 27702 / LMG 3730 / NBRC 12168 / NCIMB 10025 / NRRL B-2784 / 534)</name>
    <dbReference type="NCBI Taxonomy" id="196627"/>
    <lineage>
        <taxon>Bacteria</taxon>
        <taxon>Bacillati</taxon>
        <taxon>Actinomycetota</taxon>
        <taxon>Actinomycetes</taxon>
        <taxon>Mycobacteriales</taxon>
        <taxon>Corynebacteriaceae</taxon>
        <taxon>Corynebacterium</taxon>
    </lineage>
</organism>
<keyword id="KW-0488">Methylation</keyword>
<keyword id="KW-1185">Reference proteome</keyword>
<keyword id="KW-0687">Ribonucleoprotein</keyword>
<keyword id="KW-0689">Ribosomal protein</keyword>
<keyword id="KW-0694">RNA-binding</keyword>
<keyword id="KW-0699">rRNA-binding</keyword>
<keyword id="KW-0820">tRNA-binding</keyword>